<comment type="similarity">
    <text evidence="2">To S.violaceus chloramphenicol 3-O phosphotransferase.</text>
</comment>
<name>Y2636_MYCTO</name>
<reference key="1">
    <citation type="journal article" date="2002" name="J. Bacteriol.">
        <title>Whole-genome comparison of Mycobacterium tuberculosis clinical and laboratory strains.</title>
        <authorList>
            <person name="Fleischmann R.D."/>
            <person name="Alland D."/>
            <person name="Eisen J.A."/>
            <person name="Carpenter L."/>
            <person name="White O."/>
            <person name="Peterson J.D."/>
            <person name="DeBoy R.T."/>
            <person name="Dodson R.J."/>
            <person name="Gwinn M.L."/>
            <person name="Haft D.H."/>
            <person name="Hickey E.K."/>
            <person name="Kolonay J.F."/>
            <person name="Nelson W.C."/>
            <person name="Umayam L.A."/>
            <person name="Ermolaeva M.D."/>
            <person name="Salzberg S.L."/>
            <person name="Delcher A."/>
            <person name="Utterback T.R."/>
            <person name="Weidman J.F."/>
            <person name="Khouri H.M."/>
            <person name="Gill J."/>
            <person name="Mikula A."/>
            <person name="Bishai W."/>
            <person name="Jacobs W.R. Jr."/>
            <person name="Venter J.C."/>
            <person name="Fraser C.M."/>
        </authorList>
    </citation>
    <scope>NUCLEOTIDE SEQUENCE [LARGE SCALE GENOMIC DNA]</scope>
    <source>
        <strain>CDC 1551 / Oshkosh</strain>
    </source>
</reference>
<accession>P9WL54</accession>
<accession>L0TBU6</accession>
<accession>P65039</accession>
<accession>P71935</accession>
<sequence>MINPTRARRMRYRLAAMAGMPEGKLILLNGGSSAGKTSLALAFQDLAAECWMHIGIDLFWFALPPEQLDLARVRPEYYTWDSAVEADGLEWFTVHPGPILDLAMHSRYRAIRAYLDNGMNVIADDVIWTREWLVDALRVFEGCRVWMVGVHVSDEEGARRELERGDRHPGWNRGSARAAHADAEYDFELDTTATPVHELARELHESYQACPYPMAFNRLRKRFLS</sequence>
<protein>
    <recommendedName>
        <fullName>Putative O-phosphotransferase MT2714</fullName>
        <ecNumber>2.7.1.-</ecNumber>
    </recommendedName>
</protein>
<gene>
    <name type="ordered locus">MT2714</name>
</gene>
<dbReference type="EC" id="2.7.1.-"/>
<dbReference type="EMBL" id="AE000516">
    <property type="protein sequence ID" value="AAK47028.1"/>
    <property type="molecule type" value="Genomic_DNA"/>
</dbReference>
<dbReference type="PIR" id="H70963">
    <property type="entry name" value="H70963"/>
</dbReference>
<dbReference type="RefSeq" id="WP_003899406.1">
    <property type="nucleotide sequence ID" value="NZ_KK341227.1"/>
</dbReference>
<dbReference type="SMR" id="P9WL54"/>
<dbReference type="KEGG" id="mtc:MT2714"/>
<dbReference type="PATRIC" id="fig|83331.31.peg.2923"/>
<dbReference type="HOGENOM" id="CLU_101381_2_0_11"/>
<dbReference type="Proteomes" id="UP000001020">
    <property type="component" value="Chromosome"/>
</dbReference>
<dbReference type="GO" id="GO:0005524">
    <property type="term" value="F:ATP binding"/>
    <property type="evidence" value="ECO:0007669"/>
    <property type="project" value="UniProtKB-KW"/>
</dbReference>
<dbReference type="GO" id="GO:0016740">
    <property type="term" value="F:transferase activity"/>
    <property type="evidence" value="ECO:0007669"/>
    <property type="project" value="UniProtKB-KW"/>
</dbReference>
<dbReference type="CDD" id="cd00227">
    <property type="entry name" value="CPT"/>
    <property type="match status" value="1"/>
</dbReference>
<dbReference type="Gene3D" id="3.40.50.300">
    <property type="entry name" value="P-loop containing nucleotide triphosphate hydrolases"/>
    <property type="match status" value="1"/>
</dbReference>
<dbReference type="InterPro" id="IPR012853">
    <property type="entry name" value="CPT"/>
</dbReference>
<dbReference type="InterPro" id="IPR027417">
    <property type="entry name" value="P-loop_NTPase"/>
</dbReference>
<dbReference type="Pfam" id="PF07931">
    <property type="entry name" value="CPT"/>
    <property type="match status" value="1"/>
</dbReference>
<dbReference type="PIRSF" id="PIRSF007531">
    <property type="entry name" value="CPT"/>
    <property type="match status" value="1"/>
</dbReference>
<dbReference type="SUPFAM" id="SSF52540">
    <property type="entry name" value="P-loop containing nucleoside triphosphate hydrolases"/>
    <property type="match status" value="1"/>
</dbReference>
<keyword id="KW-0067">ATP-binding</keyword>
<keyword id="KW-0547">Nucleotide-binding</keyword>
<keyword id="KW-1185">Reference proteome</keyword>
<keyword id="KW-0808">Transferase</keyword>
<evidence type="ECO:0000255" key="1"/>
<evidence type="ECO:0000305" key="2"/>
<feature type="chain" id="PRO_0000427538" description="Putative O-phosphotransferase MT2714">
    <location>
        <begin position="1"/>
        <end position="225"/>
    </location>
</feature>
<feature type="binding site" evidence="1">
    <location>
        <begin position="30"/>
        <end position="37"/>
    </location>
    <ligand>
        <name>ATP</name>
        <dbReference type="ChEBI" id="CHEBI:30616"/>
    </ligand>
</feature>
<organism>
    <name type="scientific">Mycobacterium tuberculosis (strain CDC 1551 / Oshkosh)</name>
    <dbReference type="NCBI Taxonomy" id="83331"/>
    <lineage>
        <taxon>Bacteria</taxon>
        <taxon>Bacillati</taxon>
        <taxon>Actinomycetota</taxon>
        <taxon>Actinomycetes</taxon>
        <taxon>Mycobacteriales</taxon>
        <taxon>Mycobacteriaceae</taxon>
        <taxon>Mycobacterium</taxon>
        <taxon>Mycobacterium tuberculosis complex</taxon>
    </lineage>
</organism>
<proteinExistence type="predicted"/>